<feature type="chain" id="PRO_0000159149" description="Uncharacterized polyferredoxin-like protein MJ0514.1">
    <location>
        <begin position="1"/>
        <end position="163"/>
    </location>
</feature>
<feature type="domain" description="4Fe-4S ferredoxin-type 1" evidence="2">
    <location>
        <begin position="30"/>
        <end position="59"/>
    </location>
</feature>
<feature type="domain" description="4Fe-4S ferredoxin-type 2" evidence="2">
    <location>
        <begin position="61"/>
        <end position="90"/>
    </location>
</feature>
<feature type="domain" description="4Fe-4S ferredoxin-type 3" evidence="2">
    <location>
        <begin position="105"/>
        <end position="136"/>
    </location>
</feature>
<feature type="domain" description="4Fe-4S ferredoxin-type 4" evidence="2">
    <location>
        <begin position="136"/>
        <end position="163"/>
    </location>
</feature>
<feature type="binding site" evidence="1">
    <location>
        <position position="39"/>
    </location>
    <ligand>
        <name>[4Fe-4S] cluster</name>
        <dbReference type="ChEBI" id="CHEBI:49883"/>
    </ligand>
</feature>
<feature type="binding site" evidence="1">
    <location>
        <position position="42"/>
    </location>
    <ligand>
        <name>[4Fe-4S] cluster</name>
        <dbReference type="ChEBI" id="CHEBI:49883"/>
    </ligand>
</feature>
<feature type="binding site" evidence="1">
    <location>
        <position position="45"/>
    </location>
    <ligand>
        <name>[4Fe-4S] cluster</name>
        <dbReference type="ChEBI" id="CHEBI:49883"/>
    </ligand>
</feature>
<feature type="binding site" evidence="1">
    <location>
        <position position="49"/>
    </location>
    <ligand>
        <name>[4Fe-4S] cluster</name>
        <dbReference type="ChEBI" id="CHEBI:49883"/>
    </ligand>
</feature>
<feature type="binding site" evidence="1">
    <location>
        <position position="70"/>
    </location>
    <ligand>
        <name>[4Fe-4S] cluster</name>
        <dbReference type="ChEBI" id="CHEBI:49883"/>
    </ligand>
</feature>
<feature type="binding site" evidence="1">
    <location>
        <position position="73"/>
    </location>
    <ligand>
        <name>[4Fe-4S] cluster</name>
        <dbReference type="ChEBI" id="CHEBI:49883"/>
    </ligand>
</feature>
<feature type="binding site" evidence="1">
    <location>
        <position position="76"/>
    </location>
    <ligand>
        <name>[4Fe-4S] cluster</name>
        <dbReference type="ChEBI" id="CHEBI:49883"/>
    </ligand>
</feature>
<feature type="binding site" evidence="1">
    <location>
        <position position="80"/>
    </location>
    <ligand>
        <name>[4Fe-4S] cluster</name>
        <dbReference type="ChEBI" id="CHEBI:49883"/>
    </ligand>
</feature>
<feature type="binding site" evidence="1">
    <location>
        <position position="116"/>
    </location>
    <ligand>
        <name>[4Fe-4S] cluster</name>
        <dbReference type="ChEBI" id="CHEBI:49883"/>
    </ligand>
</feature>
<feature type="binding site" evidence="1">
    <location>
        <position position="119"/>
    </location>
    <ligand>
        <name>[4Fe-4S] cluster</name>
        <dbReference type="ChEBI" id="CHEBI:49883"/>
    </ligand>
</feature>
<feature type="binding site" evidence="1">
    <location>
        <position position="122"/>
    </location>
    <ligand>
        <name>[4Fe-4S] cluster</name>
        <dbReference type="ChEBI" id="CHEBI:49883"/>
    </ligand>
</feature>
<feature type="binding site" evidence="1">
    <location>
        <position position="126"/>
    </location>
    <ligand>
        <name>[4Fe-4S] cluster</name>
        <dbReference type="ChEBI" id="CHEBI:49883"/>
    </ligand>
</feature>
<feature type="binding site" evidence="1">
    <location>
        <position position="145"/>
    </location>
    <ligand>
        <name>[4Fe-4S] cluster</name>
        <dbReference type="ChEBI" id="CHEBI:49883"/>
    </ligand>
</feature>
<feature type="binding site" evidence="1">
    <location>
        <position position="148"/>
    </location>
    <ligand>
        <name>[4Fe-4S] cluster</name>
        <dbReference type="ChEBI" id="CHEBI:49883"/>
    </ligand>
</feature>
<feature type="binding site" evidence="1">
    <location>
        <position position="151"/>
    </location>
    <ligand>
        <name>[4Fe-4S] cluster</name>
        <dbReference type="ChEBI" id="CHEBI:49883"/>
    </ligand>
</feature>
<feature type="binding site" evidence="1">
    <location>
        <position position="155"/>
    </location>
    <ligand>
        <name>[4Fe-4S] cluster</name>
        <dbReference type="ChEBI" id="CHEBI:49883"/>
    </ligand>
</feature>
<accession>P81292</accession>
<dbReference type="EMBL" id="L77117">
    <property type="protein sequence ID" value="AAB98510.1"/>
    <property type="molecule type" value="Genomic_DNA"/>
</dbReference>
<dbReference type="RefSeq" id="WP_010870016.1">
    <property type="nucleotide sequence ID" value="NC_000909.1"/>
</dbReference>
<dbReference type="SMR" id="P81292"/>
<dbReference type="STRING" id="243232.MJ_0514.1"/>
<dbReference type="PaxDb" id="243232-MJ_0514.1"/>
<dbReference type="EnsemblBacteria" id="AAB98510">
    <property type="protein sequence ID" value="AAB98510"/>
    <property type="gene ID" value="MJ_0514.1"/>
</dbReference>
<dbReference type="GeneID" id="1451377"/>
<dbReference type="KEGG" id="mja:MJ_0514.1"/>
<dbReference type="eggNOG" id="arCOG02185">
    <property type="taxonomic scope" value="Archaea"/>
</dbReference>
<dbReference type="HOGENOM" id="CLU_097041_1_0_2"/>
<dbReference type="InParanoid" id="P81292"/>
<dbReference type="OrthoDB" id="5583at2157"/>
<dbReference type="PhylomeDB" id="P81292"/>
<dbReference type="Proteomes" id="UP000000805">
    <property type="component" value="Chromosome"/>
</dbReference>
<dbReference type="GO" id="GO:0051539">
    <property type="term" value="F:4 iron, 4 sulfur cluster binding"/>
    <property type="evidence" value="ECO:0007669"/>
    <property type="project" value="UniProtKB-KW"/>
</dbReference>
<dbReference type="GO" id="GO:0046872">
    <property type="term" value="F:metal ion binding"/>
    <property type="evidence" value="ECO:0007669"/>
    <property type="project" value="UniProtKB-KW"/>
</dbReference>
<dbReference type="GO" id="GO:0016491">
    <property type="term" value="F:oxidoreductase activity"/>
    <property type="evidence" value="ECO:0007669"/>
    <property type="project" value="UniProtKB-ARBA"/>
</dbReference>
<dbReference type="CDD" id="cd10549">
    <property type="entry name" value="MtMvhB_like"/>
    <property type="match status" value="1"/>
</dbReference>
<dbReference type="Gene3D" id="3.30.70.20">
    <property type="match status" value="3"/>
</dbReference>
<dbReference type="InterPro" id="IPR017896">
    <property type="entry name" value="4Fe4S_Fe-S-bd"/>
</dbReference>
<dbReference type="InterPro" id="IPR017900">
    <property type="entry name" value="4Fe4S_Fe_S_CS"/>
</dbReference>
<dbReference type="InterPro" id="IPR052977">
    <property type="entry name" value="Polyferredoxin-like_ET"/>
</dbReference>
<dbReference type="PANTHER" id="PTHR43193">
    <property type="match status" value="1"/>
</dbReference>
<dbReference type="PANTHER" id="PTHR43193:SF2">
    <property type="entry name" value="POLYFERREDOXIN PROTEIN FWDF"/>
    <property type="match status" value="1"/>
</dbReference>
<dbReference type="Pfam" id="PF13237">
    <property type="entry name" value="Fer4_10"/>
    <property type="match status" value="1"/>
</dbReference>
<dbReference type="Pfam" id="PF12838">
    <property type="entry name" value="Fer4_7"/>
    <property type="match status" value="1"/>
</dbReference>
<dbReference type="SUPFAM" id="SSF54862">
    <property type="entry name" value="4Fe-4S ferredoxins"/>
    <property type="match status" value="1"/>
</dbReference>
<dbReference type="PROSITE" id="PS00198">
    <property type="entry name" value="4FE4S_FER_1"/>
    <property type="match status" value="4"/>
</dbReference>
<dbReference type="PROSITE" id="PS51379">
    <property type="entry name" value="4FE4S_FER_2"/>
    <property type="match status" value="4"/>
</dbReference>
<keyword id="KW-0004">4Fe-4S</keyword>
<keyword id="KW-0249">Electron transport</keyword>
<keyword id="KW-0408">Iron</keyword>
<keyword id="KW-0411">Iron-sulfur</keyword>
<keyword id="KW-0479">Metal-binding</keyword>
<keyword id="KW-1185">Reference proteome</keyword>
<keyword id="KW-0677">Repeat</keyword>
<keyword id="KW-0813">Transport</keyword>
<reference key="1">
    <citation type="journal article" date="1996" name="Science">
        <title>Complete genome sequence of the methanogenic archaeon, Methanococcus jannaschii.</title>
        <authorList>
            <person name="Bult C.J."/>
            <person name="White O."/>
            <person name="Olsen G.J."/>
            <person name="Zhou L."/>
            <person name="Fleischmann R.D."/>
            <person name="Sutton G.G."/>
            <person name="Blake J.A."/>
            <person name="FitzGerald L.M."/>
            <person name="Clayton R.A."/>
            <person name="Gocayne J.D."/>
            <person name="Kerlavage A.R."/>
            <person name="Dougherty B.A."/>
            <person name="Tomb J.-F."/>
            <person name="Adams M.D."/>
            <person name="Reich C.I."/>
            <person name="Overbeek R."/>
            <person name="Kirkness E.F."/>
            <person name="Weinstock K.G."/>
            <person name="Merrick J.M."/>
            <person name="Glodek A."/>
            <person name="Scott J.L."/>
            <person name="Geoghagen N.S.M."/>
            <person name="Weidman J.F."/>
            <person name="Fuhrmann J.L."/>
            <person name="Nguyen D."/>
            <person name="Utterback T.R."/>
            <person name="Kelley J.M."/>
            <person name="Peterson J.D."/>
            <person name="Sadow P.W."/>
            <person name="Hanna M.C."/>
            <person name="Cotton M.D."/>
            <person name="Roberts K.M."/>
            <person name="Hurst M.A."/>
            <person name="Kaine B.P."/>
            <person name="Borodovsky M."/>
            <person name="Klenk H.-P."/>
            <person name="Fraser C.M."/>
            <person name="Smith H.O."/>
            <person name="Woese C.R."/>
            <person name="Venter J.C."/>
        </authorList>
    </citation>
    <scope>NUCLEOTIDE SEQUENCE [LARGE SCALE GENOMIC DNA]</scope>
    <source>
        <strain>ATCC 43067 / DSM 2661 / JAL-1 / JCM 10045 / NBRC 100440</strain>
    </source>
</reference>
<organism>
    <name type="scientific">Methanocaldococcus jannaschii (strain ATCC 43067 / DSM 2661 / JAL-1 / JCM 10045 / NBRC 100440)</name>
    <name type="common">Methanococcus jannaschii</name>
    <dbReference type="NCBI Taxonomy" id="243232"/>
    <lineage>
        <taxon>Archaea</taxon>
        <taxon>Methanobacteriati</taxon>
        <taxon>Methanobacteriota</taxon>
        <taxon>Methanomada group</taxon>
        <taxon>Methanococci</taxon>
        <taxon>Methanococcales</taxon>
        <taxon>Methanocaldococcaceae</taxon>
        <taxon>Methanocaldococcus</taxon>
    </lineage>
</organism>
<protein>
    <recommendedName>
        <fullName>Uncharacterized polyferredoxin-like protein MJ0514.1</fullName>
    </recommendedName>
</protein>
<evidence type="ECO:0000255" key="1"/>
<evidence type="ECO:0000255" key="2">
    <source>
        <dbReference type="PROSITE-ProRule" id="PRU00711"/>
    </source>
</evidence>
<gene>
    <name type="ordered locus">MJ0514.1</name>
</gene>
<name>Y51A_METJA</name>
<proteinExistence type="predicted"/>
<sequence length="163" mass="18645">MIKEIIAKHFNLADKNIQLLPKFNIILNKREIIVKEDKCISCGKCIEICPVNAITYSSDGLYITINKEKCVFCGKCKKVCPTNAIVIIRLRCEINEDARIIEVDKYEFIDYISERCASCLVCLRNCPFNAIEEYGSKIRIDINKCELCGKCEEICPLNAIILR</sequence>